<gene>
    <name evidence="1" type="primary">rex</name>
    <name type="ordered locus">Dhaf_4356</name>
</gene>
<comment type="function">
    <text evidence="1">Modulates transcription in response to changes in cellular NADH/NAD(+) redox state.</text>
</comment>
<comment type="subunit">
    <text evidence="1">Homodimer.</text>
</comment>
<comment type="subcellular location">
    <subcellularLocation>
        <location evidence="1">Cytoplasm</location>
    </subcellularLocation>
</comment>
<comment type="similarity">
    <text evidence="1">Belongs to the transcriptional regulatory Rex family.</text>
</comment>
<sequence>MKTLKIPEATIIRLSVYSRHLTDVDRKGIVTISSGDIAEGVGVSPAQVRKDLAYFGEFGTRGVGYNVKDLHRHILKILGLSQDWSVCLVGMGNLGLALTTYKGFRERGFIITSIFDNDPQKIGTTVNGVEVLPVDRLEEVAKANKTQIGIISVPSPYAQEIADKLISAGVQAILNFAPVVLNVPPEVELRNVDLAVNLEVLTFNVGTRRA</sequence>
<protein>
    <recommendedName>
        <fullName evidence="1">Redox-sensing transcriptional repressor Rex</fullName>
    </recommendedName>
</protein>
<proteinExistence type="inferred from homology"/>
<keyword id="KW-0963">Cytoplasm</keyword>
<keyword id="KW-0238">DNA-binding</keyword>
<keyword id="KW-0520">NAD</keyword>
<keyword id="KW-0678">Repressor</keyword>
<keyword id="KW-0804">Transcription</keyword>
<keyword id="KW-0805">Transcription regulation</keyword>
<accession>B8FVF9</accession>
<name>REX_DESHD</name>
<feature type="chain" id="PRO_1000213634" description="Redox-sensing transcriptional repressor Rex">
    <location>
        <begin position="1"/>
        <end position="210"/>
    </location>
</feature>
<feature type="DNA-binding region" description="H-T-H motif" evidence="1">
    <location>
        <begin position="16"/>
        <end position="55"/>
    </location>
</feature>
<feature type="binding site" evidence="1">
    <location>
        <begin position="90"/>
        <end position="95"/>
    </location>
    <ligand>
        <name>NAD(+)</name>
        <dbReference type="ChEBI" id="CHEBI:57540"/>
    </ligand>
</feature>
<organism>
    <name type="scientific">Desulfitobacterium hafniense (strain DSM 10664 / DCB-2)</name>
    <dbReference type="NCBI Taxonomy" id="272564"/>
    <lineage>
        <taxon>Bacteria</taxon>
        <taxon>Bacillati</taxon>
        <taxon>Bacillota</taxon>
        <taxon>Clostridia</taxon>
        <taxon>Eubacteriales</taxon>
        <taxon>Desulfitobacteriaceae</taxon>
        <taxon>Desulfitobacterium</taxon>
    </lineage>
</organism>
<reference key="1">
    <citation type="journal article" date="2012" name="BMC Microbiol.">
        <title>Genome sequence of Desulfitobacterium hafniense DCB-2, a Gram-positive anaerobe capable of dehalogenation and metal reduction.</title>
        <authorList>
            <person name="Kim S.H."/>
            <person name="Harzman C."/>
            <person name="Davis J.K."/>
            <person name="Hutcheson R."/>
            <person name="Broderick J.B."/>
            <person name="Marsh T.L."/>
            <person name="Tiedje J.M."/>
        </authorList>
    </citation>
    <scope>NUCLEOTIDE SEQUENCE [LARGE SCALE GENOMIC DNA]</scope>
    <source>
        <strain>DSM 10664 / DCB-2</strain>
    </source>
</reference>
<dbReference type="EMBL" id="CP001336">
    <property type="protein sequence ID" value="ACL22361.1"/>
    <property type="molecule type" value="Genomic_DNA"/>
</dbReference>
<dbReference type="RefSeq" id="WP_015945177.1">
    <property type="nucleotide sequence ID" value="NC_011830.1"/>
</dbReference>
<dbReference type="SMR" id="B8FVF9"/>
<dbReference type="KEGG" id="dhd:Dhaf_4356"/>
<dbReference type="HOGENOM" id="CLU_061534_0_1_9"/>
<dbReference type="Proteomes" id="UP000007726">
    <property type="component" value="Chromosome"/>
</dbReference>
<dbReference type="GO" id="GO:0005737">
    <property type="term" value="C:cytoplasm"/>
    <property type="evidence" value="ECO:0007669"/>
    <property type="project" value="UniProtKB-SubCell"/>
</dbReference>
<dbReference type="GO" id="GO:0003677">
    <property type="term" value="F:DNA binding"/>
    <property type="evidence" value="ECO:0007669"/>
    <property type="project" value="UniProtKB-UniRule"/>
</dbReference>
<dbReference type="GO" id="GO:0003700">
    <property type="term" value="F:DNA-binding transcription factor activity"/>
    <property type="evidence" value="ECO:0007669"/>
    <property type="project" value="UniProtKB-UniRule"/>
</dbReference>
<dbReference type="GO" id="GO:0045892">
    <property type="term" value="P:negative regulation of DNA-templated transcription"/>
    <property type="evidence" value="ECO:0007669"/>
    <property type="project" value="InterPro"/>
</dbReference>
<dbReference type="GO" id="GO:0051775">
    <property type="term" value="P:response to redox state"/>
    <property type="evidence" value="ECO:0007669"/>
    <property type="project" value="InterPro"/>
</dbReference>
<dbReference type="Gene3D" id="3.40.50.720">
    <property type="entry name" value="NAD(P)-binding Rossmann-like Domain"/>
    <property type="match status" value="1"/>
</dbReference>
<dbReference type="Gene3D" id="1.10.10.10">
    <property type="entry name" value="Winged helix-like DNA-binding domain superfamily/Winged helix DNA-binding domain"/>
    <property type="match status" value="1"/>
</dbReference>
<dbReference type="HAMAP" id="MF_01131">
    <property type="entry name" value="Rex"/>
    <property type="match status" value="1"/>
</dbReference>
<dbReference type="InterPro" id="IPR003781">
    <property type="entry name" value="CoA-bd"/>
</dbReference>
<dbReference type="InterPro" id="IPR036291">
    <property type="entry name" value="NAD(P)-bd_dom_sf"/>
</dbReference>
<dbReference type="InterPro" id="IPR009718">
    <property type="entry name" value="Rex_DNA-bd_C_dom"/>
</dbReference>
<dbReference type="InterPro" id="IPR022876">
    <property type="entry name" value="Tscrpt_rep_Rex"/>
</dbReference>
<dbReference type="InterPro" id="IPR036388">
    <property type="entry name" value="WH-like_DNA-bd_sf"/>
</dbReference>
<dbReference type="InterPro" id="IPR036390">
    <property type="entry name" value="WH_DNA-bd_sf"/>
</dbReference>
<dbReference type="NCBIfam" id="NF003989">
    <property type="entry name" value="PRK05472.1-3"/>
    <property type="match status" value="1"/>
</dbReference>
<dbReference type="NCBIfam" id="NF003992">
    <property type="entry name" value="PRK05472.2-1"/>
    <property type="match status" value="1"/>
</dbReference>
<dbReference type="NCBIfam" id="NF003993">
    <property type="entry name" value="PRK05472.2-2"/>
    <property type="match status" value="1"/>
</dbReference>
<dbReference type="NCBIfam" id="NF003994">
    <property type="entry name" value="PRK05472.2-3"/>
    <property type="match status" value="1"/>
</dbReference>
<dbReference type="NCBIfam" id="NF003995">
    <property type="entry name" value="PRK05472.2-4"/>
    <property type="match status" value="1"/>
</dbReference>
<dbReference type="NCBIfam" id="NF003996">
    <property type="entry name" value="PRK05472.2-5"/>
    <property type="match status" value="1"/>
</dbReference>
<dbReference type="PANTHER" id="PTHR35786">
    <property type="entry name" value="REDOX-SENSING TRANSCRIPTIONAL REPRESSOR REX"/>
    <property type="match status" value="1"/>
</dbReference>
<dbReference type="PANTHER" id="PTHR35786:SF1">
    <property type="entry name" value="REDOX-SENSING TRANSCRIPTIONAL REPRESSOR REX 1"/>
    <property type="match status" value="1"/>
</dbReference>
<dbReference type="Pfam" id="PF02629">
    <property type="entry name" value="CoA_binding"/>
    <property type="match status" value="1"/>
</dbReference>
<dbReference type="Pfam" id="PF06971">
    <property type="entry name" value="Put_DNA-bind_N"/>
    <property type="match status" value="1"/>
</dbReference>
<dbReference type="SMART" id="SM00881">
    <property type="entry name" value="CoA_binding"/>
    <property type="match status" value="1"/>
</dbReference>
<dbReference type="SUPFAM" id="SSF51735">
    <property type="entry name" value="NAD(P)-binding Rossmann-fold domains"/>
    <property type="match status" value="1"/>
</dbReference>
<dbReference type="SUPFAM" id="SSF46785">
    <property type="entry name" value="Winged helix' DNA-binding domain"/>
    <property type="match status" value="1"/>
</dbReference>
<evidence type="ECO:0000255" key="1">
    <source>
        <dbReference type="HAMAP-Rule" id="MF_01131"/>
    </source>
</evidence>